<gene>
    <name evidence="1" type="primary">grpE</name>
    <name type="ordered locus">LGAS_0821</name>
</gene>
<comment type="function">
    <text evidence="1">Participates actively in the response to hyperosmotic and heat shock by preventing the aggregation of stress-denatured proteins, in association with DnaK and GrpE. It is the nucleotide exchange factor for DnaK and may function as a thermosensor. Unfolded proteins bind initially to DnaJ; upon interaction with the DnaJ-bound protein, DnaK hydrolyzes its bound ATP, resulting in the formation of a stable complex. GrpE releases ADP from DnaK; ATP binding to DnaK triggers the release of the substrate protein, thus completing the reaction cycle. Several rounds of ATP-dependent interactions between DnaJ, DnaK and GrpE are required for fully efficient folding.</text>
</comment>
<comment type="subunit">
    <text evidence="1">Homodimer.</text>
</comment>
<comment type="subcellular location">
    <subcellularLocation>
        <location evidence="1">Cytoplasm</location>
    </subcellularLocation>
</comment>
<comment type="similarity">
    <text evidence="1">Belongs to the GrpE family.</text>
</comment>
<sequence>MSKEEFPHEKDLKDEVTPDKAPKKDPKAASKEEVKEDPAKDYEKEIAELSAKNKDLEDKYLRSEAEIQNMQARYAKERAQLIKYESQSLAKEVLPAMDNLERALAVKADDEAAKQLQKGVQMTLDSLVKSMKDQGITEIKAEGETFDPALHQAVQTVAAENDDQKDHVVKVLQKGYQYKDRTLRPAMVVVAQ</sequence>
<accession>Q044B0</accession>
<reference key="1">
    <citation type="journal article" date="2006" name="Proc. Natl. Acad. Sci. U.S.A.">
        <title>Comparative genomics of the lactic acid bacteria.</title>
        <authorList>
            <person name="Makarova K.S."/>
            <person name="Slesarev A."/>
            <person name="Wolf Y.I."/>
            <person name="Sorokin A."/>
            <person name="Mirkin B."/>
            <person name="Koonin E.V."/>
            <person name="Pavlov A."/>
            <person name="Pavlova N."/>
            <person name="Karamychev V."/>
            <person name="Polouchine N."/>
            <person name="Shakhova V."/>
            <person name="Grigoriev I."/>
            <person name="Lou Y."/>
            <person name="Rohksar D."/>
            <person name="Lucas S."/>
            <person name="Huang K."/>
            <person name="Goodstein D.M."/>
            <person name="Hawkins T."/>
            <person name="Plengvidhya V."/>
            <person name="Welker D."/>
            <person name="Hughes J."/>
            <person name="Goh Y."/>
            <person name="Benson A."/>
            <person name="Baldwin K."/>
            <person name="Lee J.-H."/>
            <person name="Diaz-Muniz I."/>
            <person name="Dosti B."/>
            <person name="Smeianov V."/>
            <person name="Wechter W."/>
            <person name="Barabote R."/>
            <person name="Lorca G."/>
            <person name="Altermann E."/>
            <person name="Barrangou R."/>
            <person name="Ganesan B."/>
            <person name="Xie Y."/>
            <person name="Rawsthorne H."/>
            <person name="Tamir D."/>
            <person name="Parker C."/>
            <person name="Breidt F."/>
            <person name="Broadbent J.R."/>
            <person name="Hutkins R."/>
            <person name="O'Sullivan D."/>
            <person name="Steele J."/>
            <person name="Unlu G."/>
            <person name="Saier M.H. Jr."/>
            <person name="Klaenhammer T."/>
            <person name="Richardson P."/>
            <person name="Kozyavkin S."/>
            <person name="Weimer B.C."/>
            <person name="Mills D.A."/>
        </authorList>
    </citation>
    <scope>NUCLEOTIDE SEQUENCE [LARGE SCALE GENOMIC DNA]</scope>
    <source>
        <strain>ATCC 33323 / DSM 20243 / BCRC 14619 / CIP 102991 / JCM 1131 / KCTC 3163 / NCIMB 11718 / NCTC 13722 / AM63</strain>
    </source>
</reference>
<feature type="chain" id="PRO_1000053593" description="Protein GrpE">
    <location>
        <begin position="1"/>
        <end position="192"/>
    </location>
</feature>
<feature type="region of interest" description="Disordered" evidence="2">
    <location>
        <begin position="1"/>
        <end position="43"/>
    </location>
</feature>
<name>GRPE_LACGA</name>
<keyword id="KW-0143">Chaperone</keyword>
<keyword id="KW-0963">Cytoplasm</keyword>
<keyword id="KW-0346">Stress response</keyword>
<organism>
    <name type="scientific">Lactobacillus gasseri (strain ATCC 33323 / DSM 20243 / BCRC 14619 / CIP 102991 / JCM 1131 / KCTC 3163 / NCIMB 11718 / NCTC 13722 / AM63)</name>
    <dbReference type="NCBI Taxonomy" id="324831"/>
    <lineage>
        <taxon>Bacteria</taxon>
        <taxon>Bacillati</taxon>
        <taxon>Bacillota</taxon>
        <taxon>Bacilli</taxon>
        <taxon>Lactobacillales</taxon>
        <taxon>Lactobacillaceae</taxon>
        <taxon>Lactobacillus</taxon>
    </lineage>
</organism>
<protein>
    <recommendedName>
        <fullName evidence="1">Protein GrpE</fullName>
    </recommendedName>
    <alternativeName>
        <fullName evidence="1">HSP-70 cofactor</fullName>
    </alternativeName>
</protein>
<proteinExistence type="inferred from homology"/>
<dbReference type="EMBL" id="CP000413">
    <property type="protein sequence ID" value="ABJ60212.1"/>
    <property type="molecule type" value="Genomic_DNA"/>
</dbReference>
<dbReference type="RefSeq" id="WP_003647473.1">
    <property type="nucleotide sequence ID" value="NZ_WBMG01000005.1"/>
</dbReference>
<dbReference type="SMR" id="Q044B0"/>
<dbReference type="GeneID" id="29639206"/>
<dbReference type="KEGG" id="lga:LGAS_0821"/>
<dbReference type="HOGENOM" id="CLU_057217_6_3_9"/>
<dbReference type="BioCyc" id="LGAS324831:G1G6Y-815-MONOMER"/>
<dbReference type="Proteomes" id="UP000000664">
    <property type="component" value="Chromosome"/>
</dbReference>
<dbReference type="GO" id="GO:0005737">
    <property type="term" value="C:cytoplasm"/>
    <property type="evidence" value="ECO:0007669"/>
    <property type="project" value="UniProtKB-SubCell"/>
</dbReference>
<dbReference type="GO" id="GO:0000774">
    <property type="term" value="F:adenyl-nucleotide exchange factor activity"/>
    <property type="evidence" value="ECO:0007669"/>
    <property type="project" value="InterPro"/>
</dbReference>
<dbReference type="GO" id="GO:0042803">
    <property type="term" value="F:protein homodimerization activity"/>
    <property type="evidence" value="ECO:0007669"/>
    <property type="project" value="InterPro"/>
</dbReference>
<dbReference type="GO" id="GO:0051087">
    <property type="term" value="F:protein-folding chaperone binding"/>
    <property type="evidence" value="ECO:0007669"/>
    <property type="project" value="InterPro"/>
</dbReference>
<dbReference type="GO" id="GO:0051082">
    <property type="term" value="F:unfolded protein binding"/>
    <property type="evidence" value="ECO:0007669"/>
    <property type="project" value="TreeGrafter"/>
</dbReference>
<dbReference type="GO" id="GO:0006457">
    <property type="term" value="P:protein folding"/>
    <property type="evidence" value="ECO:0007669"/>
    <property type="project" value="InterPro"/>
</dbReference>
<dbReference type="CDD" id="cd00446">
    <property type="entry name" value="GrpE"/>
    <property type="match status" value="1"/>
</dbReference>
<dbReference type="FunFam" id="2.30.22.10:FF:000001">
    <property type="entry name" value="Protein GrpE"/>
    <property type="match status" value="1"/>
</dbReference>
<dbReference type="Gene3D" id="3.90.20.20">
    <property type="match status" value="1"/>
</dbReference>
<dbReference type="Gene3D" id="2.30.22.10">
    <property type="entry name" value="Head domain of nucleotide exchange factor GrpE"/>
    <property type="match status" value="1"/>
</dbReference>
<dbReference type="HAMAP" id="MF_01151">
    <property type="entry name" value="GrpE"/>
    <property type="match status" value="1"/>
</dbReference>
<dbReference type="InterPro" id="IPR000740">
    <property type="entry name" value="GrpE"/>
</dbReference>
<dbReference type="InterPro" id="IPR013805">
    <property type="entry name" value="GrpE_coiled_coil"/>
</dbReference>
<dbReference type="InterPro" id="IPR009012">
    <property type="entry name" value="GrpE_head"/>
</dbReference>
<dbReference type="NCBIfam" id="NF010738">
    <property type="entry name" value="PRK14140.1"/>
    <property type="match status" value="1"/>
</dbReference>
<dbReference type="NCBIfam" id="NF010759">
    <property type="entry name" value="PRK14162.1"/>
    <property type="match status" value="1"/>
</dbReference>
<dbReference type="PANTHER" id="PTHR21237">
    <property type="entry name" value="GRPE PROTEIN"/>
    <property type="match status" value="1"/>
</dbReference>
<dbReference type="PANTHER" id="PTHR21237:SF23">
    <property type="entry name" value="GRPE PROTEIN HOMOLOG, MITOCHONDRIAL"/>
    <property type="match status" value="1"/>
</dbReference>
<dbReference type="Pfam" id="PF01025">
    <property type="entry name" value="GrpE"/>
    <property type="match status" value="1"/>
</dbReference>
<dbReference type="PRINTS" id="PR00773">
    <property type="entry name" value="GRPEPROTEIN"/>
</dbReference>
<dbReference type="SUPFAM" id="SSF58014">
    <property type="entry name" value="Coiled-coil domain of nucleotide exchange factor GrpE"/>
    <property type="match status" value="1"/>
</dbReference>
<dbReference type="SUPFAM" id="SSF51064">
    <property type="entry name" value="Head domain of nucleotide exchange factor GrpE"/>
    <property type="match status" value="1"/>
</dbReference>
<dbReference type="PROSITE" id="PS01071">
    <property type="entry name" value="GRPE"/>
    <property type="match status" value="1"/>
</dbReference>
<evidence type="ECO:0000255" key="1">
    <source>
        <dbReference type="HAMAP-Rule" id="MF_01151"/>
    </source>
</evidence>
<evidence type="ECO:0000256" key="2">
    <source>
        <dbReference type="SAM" id="MobiDB-lite"/>
    </source>
</evidence>